<proteinExistence type="evidence at transcript level"/>
<dbReference type="EMBL" id="AY519582">
    <property type="protein sequence ID" value="AAS10052.1"/>
    <property type="molecule type" value="mRNA"/>
</dbReference>
<dbReference type="EMBL" id="AC009325">
    <property type="protein sequence ID" value="AAF01538.1"/>
    <property type="molecule type" value="Genomic_DNA"/>
</dbReference>
<dbReference type="EMBL" id="CP002686">
    <property type="protein sequence ID" value="AEE73682.1"/>
    <property type="molecule type" value="Genomic_DNA"/>
</dbReference>
<dbReference type="EMBL" id="AK118091">
    <property type="protein sequence ID" value="BAC42719.1"/>
    <property type="molecule type" value="mRNA"/>
</dbReference>
<dbReference type="EMBL" id="BT005574">
    <property type="protein sequence ID" value="AAO63994.1"/>
    <property type="molecule type" value="mRNA"/>
</dbReference>
<dbReference type="EMBL" id="AF062892">
    <property type="protein sequence ID" value="AAC83614.1"/>
    <property type="molecule type" value="mRNA"/>
</dbReference>
<dbReference type="PIR" id="T51664">
    <property type="entry name" value="T51664"/>
</dbReference>
<dbReference type="RefSeq" id="NP_186802.1">
    <property type="nucleotide sequence ID" value="NM_111019.2"/>
</dbReference>
<dbReference type="SMR" id="Q9SSA1"/>
<dbReference type="BioGRID" id="6446">
    <property type="interactions" value="6"/>
</dbReference>
<dbReference type="IntAct" id="Q9SSA1">
    <property type="interactions" value="1"/>
</dbReference>
<dbReference type="STRING" id="3702.Q9SSA1"/>
<dbReference type="PaxDb" id="3702-AT3G01530.1"/>
<dbReference type="ProteomicsDB" id="251026"/>
<dbReference type="EnsemblPlants" id="AT3G01530.1">
    <property type="protein sequence ID" value="AT3G01530.1"/>
    <property type="gene ID" value="AT3G01530"/>
</dbReference>
<dbReference type="GeneID" id="821113"/>
<dbReference type="Gramene" id="AT3G01530.1">
    <property type="protein sequence ID" value="AT3G01530.1"/>
    <property type="gene ID" value="AT3G01530"/>
</dbReference>
<dbReference type="KEGG" id="ath:AT3G01530"/>
<dbReference type="Araport" id="AT3G01530"/>
<dbReference type="TAIR" id="AT3G01530">
    <property type="gene designation" value="MYB57"/>
</dbReference>
<dbReference type="eggNOG" id="KOG0048">
    <property type="taxonomic scope" value="Eukaryota"/>
</dbReference>
<dbReference type="HOGENOM" id="CLU_028567_25_8_1"/>
<dbReference type="InParanoid" id="Q9SSA1"/>
<dbReference type="OMA" id="QSNENYW"/>
<dbReference type="PhylomeDB" id="Q9SSA1"/>
<dbReference type="PRO" id="PR:Q9SSA1"/>
<dbReference type="Proteomes" id="UP000006548">
    <property type="component" value="Chromosome 3"/>
</dbReference>
<dbReference type="ExpressionAtlas" id="Q9SSA1">
    <property type="expression patterns" value="baseline and differential"/>
</dbReference>
<dbReference type="GO" id="GO:0005634">
    <property type="term" value="C:nucleus"/>
    <property type="evidence" value="ECO:0007669"/>
    <property type="project" value="UniProtKB-SubCell"/>
</dbReference>
<dbReference type="GO" id="GO:0003700">
    <property type="term" value="F:DNA-binding transcription factor activity"/>
    <property type="evidence" value="ECO:0000250"/>
    <property type="project" value="TAIR"/>
</dbReference>
<dbReference type="GO" id="GO:1990841">
    <property type="term" value="F:promoter-specific chromatin binding"/>
    <property type="evidence" value="ECO:0000353"/>
    <property type="project" value="TAIR"/>
</dbReference>
<dbReference type="GO" id="GO:0000976">
    <property type="term" value="F:transcription cis-regulatory region binding"/>
    <property type="evidence" value="ECO:0000353"/>
    <property type="project" value="TAIR"/>
</dbReference>
<dbReference type="GO" id="GO:0009740">
    <property type="term" value="P:gibberellic acid mediated signaling pathway"/>
    <property type="evidence" value="ECO:0000270"/>
    <property type="project" value="TAIR"/>
</dbReference>
<dbReference type="GO" id="GO:0009867">
    <property type="term" value="P:jasmonic acid mediated signaling pathway"/>
    <property type="evidence" value="ECO:0000270"/>
    <property type="project" value="TAIR"/>
</dbReference>
<dbReference type="GO" id="GO:0048443">
    <property type="term" value="P:stamen development"/>
    <property type="evidence" value="ECO:0000315"/>
    <property type="project" value="TAIR"/>
</dbReference>
<dbReference type="GO" id="GO:0080086">
    <property type="term" value="P:stamen filament development"/>
    <property type="evidence" value="ECO:0000316"/>
    <property type="project" value="TAIR"/>
</dbReference>
<dbReference type="CDD" id="cd00167">
    <property type="entry name" value="SANT"/>
    <property type="match status" value="2"/>
</dbReference>
<dbReference type="FunFam" id="1.10.10.60:FF:000011">
    <property type="entry name" value="Myb transcription factor"/>
    <property type="match status" value="1"/>
</dbReference>
<dbReference type="FunFam" id="1.10.10.60:FF:000743">
    <property type="entry name" value="Transcription factor MYB57"/>
    <property type="match status" value="1"/>
</dbReference>
<dbReference type="Gene3D" id="1.10.10.60">
    <property type="entry name" value="Homeodomain-like"/>
    <property type="match status" value="2"/>
</dbReference>
<dbReference type="InterPro" id="IPR044676">
    <property type="entry name" value="EOBI/EOBII-like_plant"/>
</dbReference>
<dbReference type="InterPro" id="IPR009057">
    <property type="entry name" value="Homeodomain-like_sf"/>
</dbReference>
<dbReference type="InterPro" id="IPR017930">
    <property type="entry name" value="Myb_dom"/>
</dbReference>
<dbReference type="InterPro" id="IPR001005">
    <property type="entry name" value="SANT/Myb"/>
</dbReference>
<dbReference type="PANTHER" id="PTHR45675">
    <property type="entry name" value="MYB TRANSCRIPTION FACTOR-RELATED-RELATED"/>
    <property type="match status" value="1"/>
</dbReference>
<dbReference type="PANTHER" id="PTHR45675:SF67">
    <property type="entry name" value="TRANSCRIPTION FACTOR MYB57"/>
    <property type="match status" value="1"/>
</dbReference>
<dbReference type="Pfam" id="PF00249">
    <property type="entry name" value="Myb_DNA-binding"/>
    <property type="match status" value="2"/>
</dbReference>
<dbReference type="SMART" id="SM00717">
    <property type="entry name" value="SANT"/>
    <property type="match status" value="2"/>
</dbReference>
<dbReference type="SUPFAM" id="SSF46689">
    <property type="entry name" value="Homeodomain-like"/>
    <property type="match status" value="1"/>
</dbReference>
<dbReference type="PROSITE" id="PS51294">
    <property type="entry name" value="HTH_MYB"/>
    <property type="match status" value="2"/>
</dbReference>
<gene>
    <name type="primary">MYB57</name>
    <name type="ordered locus">At3g01530</name>
    <name type="ORF">F4P13.8</name>
</gene>
<accession>Q9SSA1</accession>
<accession>Q9ZTD5</accession>
<feature type="chain" id="PRO_0000424713" description="Transcription factor MYB57">
    <location>
        <begin position="1"/>
        <end position="206"/>
    </location>
</feature>
<feature type="domain" description="HTH myb-type 1" evidence="1">
    <location>
        <begin position="22"/>
        <end position="74"/>
    </location>
</feature>
<feature type="domain" description="HTH myb-type 2" evidence="1">
    <location>
        <begin position="75"/>
        <end position="129"/>
    </location>
</feature>
<feature type="DNA-binding region" description="H-T-H motif" evidence="1">
    <location>
        <begin position="50"/>
        <end position="74"/>
    </location>
</feature>
<feature type="DNA-binding region" description="H-T-H motif" evidence="1">
    <location>
        <begin position="102"/>
        <end position="125"/>
    </location>
</feature>
<feature type="region of interest" description="Disordered" evidence="2">
    <location>
        <begin position="1"/>
        <end position="20"/>
    </location>
</feature>
<feature type="region of interest" description="Disordered" evidence="2">
    <location>
        <begin position="138"/>
        <end position="162"/>
    </location>
</feature>
<feature type="compositionally biased region" description="Basic residues" evidence="2">
    <location>
        <begin position="1"/>
        <end position="11"/>
    </location>
</feature>
<feature type="compositionally biased region" description="Low complexity" evidence="2">
    <location>
        <begin position="144"/>
        <end position="159"/>
    </location>
</feature>
<evidence type="ECO:0000255" key="1">
    <source>
        <dbReference type="PROSITE-ProRule" id="PRU00625"/>
    </source>
</evidence>
<evidence type="ECO:0000256" key="2">
    <source>
        <dbReference type="SAM" id="MobiDB-lite"/>
    </source>
</evidence>
<evidence type="ECO:0000269" key="3">
    <source>
    </source>
</evidence>
<evidence type="ECO:0000305" key="4"/>
<comment type="function">
    <text evidence="3">Transcription factor acting redundantly with MYB21 and MYB24 to control stamen filament elongation in the late developed flowers. Repressed at the transcript levels by DELLA proteins.</text>
</comment>
<comment type="subcellular location">
    <subcellularLocation>
        <location evidence="4">Nucleus</location>
    </subcellularLocation>
</comment>
<comment type="tissue specificity">
    <text evidence="3">Expressed specifically in flowers.</text>
</comment>
<comment type="disruption phenotype">
    <text evidence="3">No visible phenotype. Myb21 and myb57 double mutant has an intermediate sterility phenotype and petals that grew to a final height parallel to the pistil. Myb24 and myb57 double mutant has petals that grew to a final height parallel to the pistil. Myb21, myb24 and myb57 triple mutant has a strongly reduced fertility and an arrested growth of the petals that never grew out of the sepals.</text>
</comment>
<keyword id="KW-0010">Activator</keyword>
<keyword id="KW-0238">DNA-binding</keyword>
<keyword id="KW-0539">Nucleus</keyword>
<keyword id="KW-1185">Reference proteome</keyword>
<keyword id="KW-0677">Repeat</keyword>
<keyword id="KW-0804">Transcription</keyword>
<keyword id="KW-0805">Transcription regulation</keyword>
<sequence length="206" mass="23717">METTMKKKGRVKATITSQKEEEGTVRKGPWTMEEDFILFNYILNHGEGLWNSVAKASGLKRTGKSCRLRWLNYLRPDVRRGNITEEEQLLIIQLHAKLGNRWSKIAKHLPGRTDNEIKNFWRTKIQRHMKVSSENMMNHQHHCSGNSQSSGMTTQGSSGKAIDTAESFSQAKTTTFNVVEQQSNENYWNVEDLWPVHLLNGDHHVI</sequence>
<organism>
    <name type="scientific">Arabidopsis thaliana</name>
    <name type="common">Mouse-ear cress</name>
    <dbReference type="NCBI Taxonomy" id="3702"/>
    <lineage>
        <taxon>Eukaryota</taxon>
        <taxon>Viridiplantae</taxon>
        <taxon>Streptophyta</taxon>
        <taxon>Embryophyta</taxon>
        <taxon>Tracheophyta</taxon>
        <taxon>Spermatophyta</taxon>
        <taxon>Magnoliopsida</taxon>
        <taxon>eudicotyledons</taxon>
        <taxon>Gunneridae</taxon>
        <taxon>Pentapetalae</taxon>
        <taxon>rosids</taxon>
        <taxon>malvids</taxon>
        <taxon>Brassicales</taxon>
        <taxon>Brassicaceae</taxon>
        <taxon>Camelineae</taxon>
        <taxon>Arabidopsis</taxon>
    </lineage>
</organism>
<reference key="1">
    <citation type="submission" date="2004-01" db="EMBL/GenBank/DDBJ databases">
        <title>The MYB transcription factor family in Arabidopsis: a genome-wide cloning and expression pattern analysis.</title>
        <authorList>
            <person name="Qu L."/>
            <person name="Gu H."/>
        </authorList>
    </citation>
    <scope>NUCLEOTIDE SEQUENCE [MRNA]</scope>
</reference>
<reference key="2">
    <citation type="journal article" date="2000" name="Nature">
        <title>Sequence and analysis of chromosome 3 of the plant Arabidopsis thaliana.</title>
        <authorList>
            <person name="Salanoubat M."/>
            <person name="Lemcke K."/>
            <person name="Rieger M."/>
            <person name="Ansorge W."/>
            <person name="Unseld M."/>
            <person name="Fartmann B."/>
            <person name="Valle G."/>
            <person name="Bloecker H."/>
            <person name="Perez-Alonso M."/>
            <person name="Obermaier B."/>
            <person name="Delseny M."/>
            <person name="Boutry M."/>
            <person name="Grivell L.A."/>
            <person name="Mache R."/>
            <person name="Puigdomenech P."/>
            <person name="De Simone V."/>
            <person name="Choisne N."/>
            <person name="Artiguenave F."/>
            <person name="Robert C."/>
            <person name="Brottier P."/>
            <person name="Wincker P."/>
            <person name="Cattolico L."/>
            <person name="Weissenbach J."/>
            <person name="Saurin W."/>
            <person name="Quetier F."/>
            <person name="Schaefer M."/>
            <person name="Mueller-Auer S."/>
            <person name="Gabel C."/>
            <person name="Fuchs M."/>
            <person name="Benes V."/>
            <person name="Wurmbach E."/>
            <person name="Drzonek H."/>
            <person name="Erfle H."/>
            <person name="Jordan N."/>
            <person name="Bangert S."/>
            <person name="Wiedelmann R."/>
            <person name="Kranz H."/>
            <person name="Voss H."/>
            <person name="Holland R."/>
            <person name="Brandt P."/>
            <person name="Nyakatura G."/>
            <person name="Vezzi A."/>
            <person name="D'Angelo M."/>
            <person name="Pallavicini A."/>
            <person name="Toppo S."/>
            <person name="Simionati B."/>
            <person name="Conrad A."/>
            <person name="Hornischer K."/>
            <person name="Kauer G."/>
            <person name="Loehnert T.-H."/>
            <person name="Nordsiek G."/>
            <person name="Reichelt J."/>
            <person name="Scharfe M."/>
            <person name="Schoen O."/>
            <person name="Bargues M."/>
            <person name="Terol J."/>
            <person name="Climent J."/>
            <person name="Navarro P."/>
            <person name="Collado C."/>
            <person name="Perez-Perez A."/>
            <person name="Ottenwaelder B."/>
            <person name="Duchemin D."/>
            <person name="Cooke R."/>
            <person name="Laudie M."/>
            <person name="Berger-Llauro C."/>
            <person name="Purnelle B."/>
            <person name="Masuy D."/>
            <person name="de Haan M."/>
            <person name="Maarse A.C."/>
            <person name="Alcaraz J.-P."/>
            <person name="Cottet A."/>
            <person name="Casacuberta E."/>
            <person name="Monfort A."/>
            <person name="Argiriou A."/>
            <person name="Flores M."/>
            <person name="Liguori R."/>
            <person name="Vitale D."/>
            <person name="Mannhaupt G."/>
            <person name="Haase D."/>
            <person name="Schoof H."/>
            <person name="Rudd S."/>
            <person name="Zaccaria P."/>
            <person name="Mewes H.-W."/>
            <person name="Mayer K.F.X."/>
            <person name="Kaul S."/>
            <person name="Town C.D."/>
            <person name="Koo H.L."/>
            <person name="Tallon L.J."/>
            <person name="Jenkins J."/>
            <person name="Rooney T."/>
            <person name="Rizzo M."/>
            <person name="Walts A."/>
            <person name="Utterback T."/>
            <person name="Fujii C.Y."/>
            <person name="Shea T.P."/>
            <person name="Creasy T.H."/>
            <person name="Haas B."/>
            <person name="Maiti R."/>
            <person name="Wu D."/>
            <person name="Peterson J."/>
            <person name="Van Aken S."/>
            <person name="Pai G."/>
            <person name="Militscher J."/>
            <person name="Sellers P."/>
            <person name="Gill J.E."/>
            <person name="Feldblyum T.V."/>
            <person name="Preuss D."/>
            <person name="Lin X."/>
            <person name="Nierman W.C."/>
            <person name="Salzberg S.L."/>
            <person name="White O."/>
            <person name="Venter J.C."/>
            <person name="Fraser C.M."/>
            <person name="Kaneko T."/>
            <person name="Nakamura Y."/>
            <person name="Sato S."/>
            <person name="Kato T."/>
            <person name="Asamizu E."/>
            <person name="Sasamoto S."/>
            <person name="Kimura T."/>
            <person name="Idesawa K."/>
            <person name="Kawashima K."/>
            <person name="Kishida Y."/>
            <person name="Kiyokawa C."/>
            <person name="Kohara M."/>
            <person name="Matsumoto M."/>
            <person name="Matsuno A."/>
            <person name="Muraki A."/>
            <person name="Nakayama S."/>
            <person name="Nakazaki N."/>
            <person name="Shinpo S."/>
            <person name="Takeuchi C."/>
            <person name="Wada T."/>
            <person name="Watanabe A."/>
            <person name="Yamada M."/>
            <person name="Yasuda M."/>
            <person name="Tabata S."/>
        </authorList>
    </citation>
    <scope>NUCLEOTIDE SEQUENCE [LARGE SCALE GENOMIC DNA]</scope>
    <source>
        <strain>cv. Columbia</strain>
    </source>
</reference>
<reference key="3">
    <citation type="journal article" date="2017" name="Plant J.">
        <title>Araport11: a complete reannotation of the Arabidopsis thaliana reference genome.</title>
        <authorList>
            <person name="Cheng C.Y."/>
            <person name="Krishnakumar V."/>
            <person name="Chan A.P."/>
            <person name="Thibaud-Nissen F."/>
            <person name="Schobel S."/>
            <person name="Town C.D."/>
        </authorList>
    </citation>
    <scope>GENOME REANNOTATION</scope>
    <source>
        <strain>cv. Columbia</strain>
    </source>
</reference>
<reference key="4">
    <citation type="journal article" date="2002" name="Science">
        <title>Functional annotation of a full-length Arabidopsis cDNA collection.</title>
        <authorList>
            <person name="Seki M."/>
            <person name="Narusaka M."/>
            <person name="Kamiya A."/>
            <person name="Ishida J."/>
            <person name="Satou M."/>
            <person name="Sakurai T."/>
            <person name="Nakajima M."/>
            <person name="Enju A."/>
            <person name="Akiyama K."/>
            <person name="Oono Y."/>
            <person name="Muramatsu M."/>
            <person name="Hayashizaki Y."/>
            <person name="Kawai J."/>
            <person name="Carninci P."/>
            <person name="Itoh M."/>
            <person name="Ishii Y."/>
            <person name="Arakawa T."/>
            <person name="Shibata K."/>
            <person name="Shinagawa A."/>
            <person name="Shinozaki K."/>
        </authorList>
    </citation>
    <scope>NUCLEOTIDE SEQUENCE [LARGE SCALE MRNA]</scope>
    <source>
        <strain>cv. Columbia</strain>
    </source>
</reference>
<reference key="5">
    <citation type="journal article" date="2003" name="Science">
        <title>Empirical analysis of transcriptional activity in the Arabidopsis genome.</title>
        <authorList>
            <person name="Yamada K."/>
            <person name="Lim J."/>
            <person name="Dale J.M."/>
            <person name="Chen H."/>
            <person name="Shinn P."/>
            <person name="Palm C.J."/>
            <person name="Southwick A.M."/>
            <person name="Wu H.C."/>
            <person name="Kim C.J."/>
            <person name="Nguyen M."/>
            <person name="Pham P.K."/>
            <person name="Cheuk R.F."/>
            <person name="Karlin-Newmann G."/>
            <person name="Liu S.X."/>
            <person name="Lam B."/>
            <person name="Sakano H."/>
            <person name="Wu T."/>
            <person name="Yu G."/>
            <person name="Miranda M."/>
            <person name="Quach H.L."/>
            <person name="Tripp M."/>
            <person name="Chang C.H."/>
            <person name="Lee J.M."/>
            <person name="Toriumi M.J."/>
            <person name="Chan M.M."/>
            <person name="Tang C.C."/>
            <person name="Onodera C.S."/>
            <person name="Deng J.M."/>
            <person name="Akiyama K."/>
            <person name="Ansari Y."/>
            <person name="Arakawa T."/>
            <person name="Banh J."/>
            <person name="Banno F."/>
            <person name="Bowser L."/>
            <person name="Brooks S.Y."/>
            <person name="Carninci P."/>
            <person name="Chao Q."/>
            <person name="Choy N."/>
            <person name="Enju A."/>
            <person name="Goldsmith A.D."/>
            <person name="Gurjal M."/>
            <person name="Hansen N.F."/>
            <person name="Hayashizaki Y."/>
            <person name="Johnson-Hopson C."/>
            <person name="Hsuan V.W."/>
            <person name="Iida K."/>
            <person name="Karnes M."/>
            <person name="Khan S."/>
            <person name="Koesema E."/>
            <person name="Ishida J."/>
            <person name="Jiang P.X."/>
            <person name="Jones T."/>
            <person name="Kawai J."/>
            <person name="Kamiya A."/>
            <person name="Meyers C."/>
            <person name="Nakajima M."/>
            <person name="Narusaka M."/>
            <person name="Seki M."/>
            <person name="Sakurai T."/>
            <person name="Satou M."/>
            <person name="Tamse R."/>
            <person name="Vaysberg M."/>
            <person name="Wallender E.K."/>
            <person name="Wong C."/>
            <person name="Yamamura Y."/>
            <person name="Yuan S."/>
            <person name="Shinozaki K."/>
            <person name="Davis R.W."/>
            <person name="Theologis A."/>
            <person name="Ecker J.R."/>
        </authorList>
    </citation>
    <scope>NUCLEOTIDE SEQUENCE [LARGE SCALE MRNA]</scope>
    <source>
        <strain>cv. Columbia</strain>
    </source>
</reference>
<reference key="6">
    <citation type="journal article" date="1998" name="Plant J.">
        <title>Towards functional characterisation of the members of the R2R3-MYB gene family from Arabidopsis thaliana.</title>
        <authorList>
            <person name="Kranz H.D."/>
            <person name="Denekamp M."/>
            <person name="Greco R."/>
            <person name="Jin H.-L."/>
            <person name="Leyva A."/>
            <person name="Meissner R.C."/>
            <person name="Petroni K."/>
            <person name="Urzainqui A."/>
            <person name="Bevan M."/>
            <person name="Martin C."/>
            <person name="Smeekens S."/>
            <person name="Tonelli C."/>
            <person name="Paz-Ares J."/>
            <person name="Weisshaar B."/>
        </authorList>
    </citation>
    <scope>NUCLEOTIDE SEQUENCE [MRNA] OF 89-206</scope>
</reference>
<reference key="7">
    <citation type="journal article" date="2009" name="PLoS Genet.">
        <title>Gibberellin acts through jasmonate to control the expression of MYB21, MYB24, and MYB57 to promote stamen filament growth in Arabidopsis.</title>
        <authorList>
            <person name="Cheng H."/>
            <person name="Song S."/>
            <person name="Xiao L."/>
            <person name="Soo H.M."/>
            <person name="Cheng Z."/>
            <person name="Xie D."/>
            <person name="Peng J."/>
        </authorList>
    </citation>
    <scope>FUNCTION</scope>
    <scope>TISSUE SPECIFICITY</scope>
    <scope>DISRUPTION PHENOTYPE</scope>
</reference>
<name>MYB57_ARATH</name>
<protein>
    <recommendedName>
        <fullName>Transcription factor MYB57</fullName>
    </recommendedName>
    <alternativeName>
        <fullName>Myb-related protein 57</fullName>
        <shortName>AtMYB57</shortName>
    </alternativeName>
</protein>